<keyword id="KW-1003">Cell membrane</keyword>
<keyword id="KW-0406">Ion transport</keyword>
<keyword id="KW-0472">Membrane</keyword>
<keyword id="KW-0630">Potassium</keyword>
<keyword id="KW-0633">Potassium transport</keyword>
<keyword id="KW-1185">Reference proteome</keyword>
<keyword id="KW-0769">Symport</keyword>
<keyword id="KW-0812">Transmembrane</keyword>
<keyword id="KW-1133">Transmembrane helix</keyword>
<keyword id="KW-0813">Transport</keyword>
<feature type="chain" id="PRO_0000208993" description="Probable potassium transport system protein Kup 1">
    <location>
        <begin position="1"/>
        <end position="597"/>
    </location>
</feature>
<feature type="transmembrane region" description="Helical" evidence="2">
    <location>
        <begin position="23"/>
        <end position="43"/>
    </location>
</feature>
<feature type="transmembrane region" description="Helical" evidence="2">
    <location>
        <begin position="72"/>
        <end position="92"/>
    </location>
</feature>
<feature type="transmembrane region" description="Helical" evidence="2">
    <location>
        <begin position="98"/>
        <end position="118"/>
    </location>
</feature>
<feature type="transmembrane region" description="Helical" evidence="2">
    <location>
        <begin position="143"/>
        <end position="163"/>
    </location>
</feature>
<feature type="transmembrane region" description="Helical" evidence="2">
    <location>
        <begin position="174"/>
        <end position="194"/>
    </location>
</feature>
<feature type="transmembrane region" description="Helical" evidence="2">
    <location>
        <begin position="226"/>
        <end position="246"/>
    </location>
</feature>
<feature type="transmembrane region" description="Helical" evidence="2">
    <location>
        <begin position="273"/>
        <end position="293"/>
    </location>
</feature>
<feature type="transmembrane region" description="Helical" evidence="2">
    <location>
        <begin position="303"/>
        <end position="323"/>
    </location>
</feature>
<feature type="transmembrane region" description="Helical" evidence="2">
    <location>
        <begin position="329"/>
        <end position="349"/>
    </location>
</feature>
<feature type="transmembrane region" description="Helical" evidence="2">
    <location>
        <begin position="353"/>
        <end position="373"/>
    </location>
</feature>
<reference key="1">
    <citation type="journal article" date="2002" name="Proc. Natl. Acad. Sci. U.S.A.">
        <title>The genome sequence of Bifidobacterium longum reflects its adaptation to the human gastrointestinal tract.</title>
        <authorList>
            <person name="Schell M.A."/>
            <person name="Karmirantzou M."/>
            <person name="Snel B."/>
            <person name="Vilanova D."/>
            <person name="Berger B."/>
            <person name="Pessi G."/>
            <person name="Zwahlen M.-C."/>
            <person name="Desiere F."/>
            <person name="Bork P."/>
            <person name="Delley M."/>
            <person name="Pridmore R.D."/>
            <person name="Arigoni F."/>
        </authorList>
    </citation>
    <scope>NUCLEOTIDE SEQUENCE [LARGE SCALE GENOMIC DNA]</scope>
    <source>
        <strain>NCC 2705</strain>
    </source>
</reference>
<comment type="function">
    <text evidence="1">Transport of potassium into the cell. Likely operates as a K(+):H(+) symporter.</text>
</comment>
<comment type="catalytic activity">
    <reaction evidence="1">
        <text>K(+)(in) + H(+)(in) = K(+)(out) + H(+)(out)</text>
        <dbReference type="Rhea" id="RHEA:28490"/>
        <dbReference type="ChEBI" id="CHEBI:15378"/>
        <dbReference type="ChEBI" id="CHEBI:29103"/>
    </reaction>
    <physiologicalReaction direction="right-to-left" evidence="1">
        <dbReference type="Rhea" id="RHEA:28492"/>
    </physiologicalReaction>
</comment>
<comment type="subcellular location">
    <subcellularLocation>
        <location evidence="1">Cell membrane</location>
        <topology evidence="1">Multi-pass membrane protein</topology>
    </subcellularLocation>
</comment>
<comment type="similarity">
    <text evidence="3">Belongs to the HAK/KUP transporter (TC 2.A.72) family.</text>
</comment>
<proteinExistence type="inferred from homology"/>
<sequence>MGCLDVRFCRIIFALYSLIRKYGAWLVIPAMLGGAAFLADSVLTPAVSISSAVEGLKTLPALEHLFTENKDLTMMITAVIIVILFAVQSRGTESIGKVFGSVVMVWFAFLAIVGVVAIGNDWSVLAALNPYYGIKFLFSPNNATGLALMGTVFLSTTGAEALYSDMGHVGRGNIYFTWPFIKVALVLNYFGQGAWMLHNQNNPELADAEGINPFFQMMDPNVRYVAVVLSVTAGIIASQALITGAFTMVSEATGLNWMPHLQVCYPARTRGQLYIPVVNVVLCVATLAVLLLFRDSEHISAAYGLALTITMITTTILLGIYLWHRSNKFGAVVFTIVFLAIQVLFFAASMAKFLHGGWFTLLLTLAILMIMYTWNEGTKLERSQRRHMMPKDFLPALDKLHGDSRIHRFADNIVYLTSDPDLKRLDTDIFFSIFADHPKRARAWWAVAVETTDEPFTREYSVESFGTDYLFRVRIRLGFKVSQSIPAYLHQIMHDLEKTGELPNQQSIYPKLDADPGIGTIRYVVIHKALMPESKVSGRGALSLQIKYAIRRVAGSPVKWFGLAPYNPLVEVQPLFVSTRRPPRLTRVASQAPKREG</sequence>
<name>KUP1_BIFLO</name>
<evidence type="ECO:0000250" key="1"/>
<evidence type="ECO:0000255" key="2"/>
<evidence type="ECO:0000305" key="3"/>
<gene>
    <name type="primary">kup1</name>
    <name type="ordered locus">BL0545</name>
</gene>
<accession>Q8G6U3</accession>
<organism>
    <name type="scientific">Bifidobacterium longum (strain NCC 2705)</name>
    <dbReference type="NCBI Taxonomy" id="206672"/>
    <lineage>
        <taxon>Bacteria</taxon>
        <taxon>Bacillati</taxon>
        <taxon>Actinomycetota</taxon>
        <taxon>Actinomycetes</taxon>
        <taxon>Bifidobacteriales</taxon>
        <taxon>Bifidobacteriaceae</taxon>
        <taxon>Bifidobacterium</taxon>
    </lineage>
</organism>
<protein>
    <recommendedName>
        <fullName>Probable potassium transport system protein Kup 1</fullName>
    </recommendedName>
</protein>
<dbReference type="EMBL" id="AE014295">
    <property type="protein sequence ID" value="AAN24369.1"/>
    <property type="molecule type" value="Genomic_DNA"/>
</dbReference>
<dbReference type="RefSeq" id="NP_695733.1">
    <property type="nucleotide sequence ID" value="NC_004307.2"/>
</dbReference>
<dbReference type="EnsemblBacteria" id="AAN24369">
    <property type="protein sequence ID" value="AAN24369"/>
    <property type="gene ID" value="BL0545"/>
</dbReference>
<dbReference type="KEGG" id="blo:BL0545"/>
<dbReference type="PATRIC" id="fig|206672.9.peg.1287"/>
<dbReference type="HOGENOM" id="CLU_008142_4_1_11"/>
<dbReference type="OrthoDB" id="9805577at2"/>
<dbReference type="PhylomeDB" id="Q8G6U3"/>
<dbReference type="Proteomes" id="UP000000439">
    <property type="component" value="Chromosome"/>
</dbReference>
<dbReference type="GO" id="GO:0005886">
    <property type="term" value="C:plasma membrane"/>
    <property type="evidence" value="ECO:0007669"/>
    <property type="project" value="UniProtKB-SubCell"/>
</dbReference>
<dbReference type="GO" id="GO:0015079">
    <property type="term" value="F:potassium ion transmembrane transporter activity"/>
    <property type="evidence" value="ECO:0007669"/>
    <property type="project" value="InterPro"/>
</dbReference>
<dbReference type="GO" id="GO:0015293">
    <property type="term" value="F:symporter activity"/>
    <property type="evidence" value="ECO:0007669"/>
    <property type="project" value="UniProtKB-KW"/>
</dbReference>
<dbReference type="InterPro" id="IPR003855">
    <property type="entry name" value="K+_transporter"/>
</dbReference>
<dbReference type="InterPro" id="IPR053952">
    <property type="entry name" value="K_trans_C"/>
</dbReference>
<dbReference type="InterPro" id="IPR053951">
    <property type="entry name" value="K_trans_N"/>
</dbReference>
<dbReference type="PANTHER" id="PTHR30540:SF79">
    <property type="entry name" value="LOW AFFINITY POTASSIUM TRANSPORT SYSTEM PROTEIN KUP"/>
    <property type="match status" value="1"/>
</dbReference>
<dbReference type="PANTHER" id="PTHR30540">
    <property type="entry name" value="OSMOTIC STRESS POTASSIUM TRANSPORTER"/>
    <property type="match status" value="1"/>
</dbReference>
<dbReference type="Pfam" id="PF02705">
    <property type="entry name" value="K_trans"/>
    <property type="match status" value="1"/>
</dbReference>
<dbReference type="Pfam" id="PF22776">
    <property type="entry name" value="K_trans_C"/>
    <property type="match status" value="1"/>
</dbReference>